<dbReference type="EMBL" id="CP000551">
    <property type="protein sequence ID" value="ABM71154.1"/>
    <property type="molecule type" value="Genomic_DNA"/>
</dbReference>
<dbReference type="RefSeq" id="WP_011819272.1">
    <property type="nucleotide sequence ID" value="NC_008816.1"/>
</dbReference>
<dbReference type="SMR" id="A2BTP3"/>
<dbReference type="STRING" id="146891.A9601_18711"/>
<dbReference type="KEGG" id="pmb:A9601_18711"/>
<dbReference type="eggNOG" id="COG0292">
    <property type="taxonomic scope" value="Bacteria"/>
</dbReference>
<dbReference type="HOGENOM" id="CLU_123265_1_0_3"/>
<dbReference type="OrthoDB" id="9808966at2"/>
<dbReference type="Proteomes" id="UP000002590">
    <property type="component" value="Chromosome"/>
</dbReference>
<dbReference type="GO" id="GO:1990904">
    <property type="term" value="C:ribonucleoprotein complex"/>
    <property type="evidence" value="ECO:0007669"/>
    <property type="project" value="UniProtKB-KW"/>
</dbReference>
<dbReference type="GO" id="GO:0005840">
    <property type="term" value="C:ribosome"/>
    <property type="evidence" value="ECO:0007669"/>
    <property type="project" value="UniProtKB-KW"/>
</dbReference>
<dbReference type="GO" id="GO:0019843">
    <property type="term" value="F:rRNA binding"/>
    <property type="evidence" value="ECO:0007669"/>
    <property type="project" value="UniProtKB-UniRule"/>
</dbReference>
<dbReference type="GO" id="GO:0003735">
    <property type="term" value="F:structural constituent of ribosome"/>
    <property type="evidence" value="ECO:0007669"/>
    <property type="project" value="InterPro"/>
</dbReference>
<dbReference type="GO" id="GO:0000027">
    <property type="term" value="P:ribosomal large subunit assembly"/>
    <property type="evidence" value="ECO:0007669"/>
    <property type="project" value="UniProtKB-UniRule"/>
</dbReference>
<dbReference type="GO" id="GO:0006412">
    <property type="term" value="P:translation"/>
    <property type="evidence" value="ECO:0007669"/>
    <property type="project" value="InterPro"/>
</dbReference>
<dbReference type="CDD" id="cd07026">
    <property type="entry name" value="Ribosomal_L20"/>
    <property type="match status" value="1"/>
</dbReference>
<dbReference type="FunFam" id="1.10.1900.20:FF:000001">
    <property type="entry name" value="50S ribosomal protein L20"/>
    <property type="match status" value="1"/>
</dbReference>
<dbReference type="Gene3D" id="6.10.160.10">
    <property type="match status" value="1"/>
</dbReference>
<dbReference type="Gene3D" id="1.10.1900.20">
    <property type="entry name" value="Ribosomal protein L20"/>
    <property type="match status" value="1"/>
</dbReference>
<dbReference type="HAMAP" id="MF_00382">
    <property type="entry name" value="Ribosomal_bL20"/>
    <property type="match status" value="1"/>
</dbReference>
<dbReference type="InterPro" id="IPR005813">
    <property type="entry name" value="Ribosomal_bL20"/>
</dbReference>
<dbReference type="InterPro" id="IPR049946">
    <property type="entry name" value="RIBOSOMAL_L20_CS"/>
</dbReference>
<dbReference type="InterPro" id="IPR035566">
    <property type="entry name" value="Ribosomal_protein_bL20_C"/>
</dbReference>
<dbReference type="NCBIfam" id="TIGR01032">
    <property type="entry name" value="rplT_bact"/>
    <property type="match status" value="1"/>
</dbReference>
<dbReference type="PANTHER" id="PTHR10986">
    <property type="entry name" value="39S RIBOSOMAL PROTEIN L20"/>
    <property type="match status" value="1"/>
</dbReference>
<dbReference type="Pfam" id="PF00453">
    <property type="entry name" value="Ribosomal_L20"/>
    <property type="match status" value="1"/>
</dbReference>
<dbReference type="PRINTS" id="PR00062">
    <property type="entry name" value="RIBOSOMALL20"/>
</dbReference>
<dbReference type="SUPFAM" id="SSF74731">
    <property type="entry name" value="Ribosomal protein L20"/>
    <property type="match status" value="1"/>
</dbReference>
<dbReference type="PROSITE" id="PS00937">
    <property type="entry name" value="RIBOSOMAL_L20"/>
    <property type="match status" value="1"/>
</dbReference>
<reference key="1">
    <citation type="journal article" date="2007" name="PLoS Genet.">
        <title>Patterns and implications of gene gain and loss in the evolution of Prochlorococcus.</title>
        <authorList>
            <person name="Kettler G.C."/>
            <person name="Martiny A.C."/>
            <person name="Huang K."/>
            <person name="Zucker J."/>
            <person name="Coleman M.L."/>
            <person name="Rodrigue S."/>
            <person name="Chen F."/>
            <person name="Lapidus A."/>
            <person name="Ferriera S."/>
            <person name="Johnson J."/>
            <person name="Steglich C."/>
            <person name="Church G.M."/>
            <person name="Richardson P."/>
            <person name="Chisholm S.W."/>
        </authorList>
    </citation>
    <scope>NUCLEOTIDE SEQUENCE [LARGE SCALE GENOMIC DNA]</scope>
    <source>
        <strain>AS9601</strain>
    </source>
</reference>
<proteinExistence type="inferred from homology"/>
<name>RL20_PROMS</name>
<feature type="chain" id="PRO_1000049037" description="Large ribosomal subunit protein bL20">
    <location>
        <begin position="1"/>
        <end position="115"/>
    </location>
</feature>
<evidence type="ECO:0000255" key="1">
    <source>
        <dbReference type="HAMAP-Rule" id="MF_00382"/>
    </source>
</evidence>
<evidence type="ECO:0000305" key="2"/>
<accession>A2BTP3</accession>
<sequence>MARVKRGNIARKRRNKILNLAKGFRGGNKNLFRTANQRVMKALCNAYRDRRRRKRDFRRLWISRINASARINGTNYSKLINGMKNADIIINRKMLAQLAITDPKCFEKIVSSVSQ</sequence>
<protein>
    <recommendedName>
        <fullName evidence="1">Large ribosomal subunit protein bL20</fullName>
    </recommendedName>
    <alternativeName>
        <fullName evidence="2">50S ribosomal protein L20</fullName>
    </alternativeName>
</protein>
<gene>
    <name evidence="1" type="primary">rplT</name>
    <name evidence="1" type="synonym">rpl20</name>
    <name type="ordered locus">A9601_18711</name>
</gene>
<comment type="function">
    <text evidence="1">Binds directly to 23S ribosomal RNA and is necessary for the in vitro assembly process of the 50S ribosomal subunit. It is not involved in the protein synthesizing functions of that subunit.</text>
</comment>
<comment type="similarity">
    <text evidence="1">Belongs to the bacterial ribosomal protein bL20 family.</text>
</comment>
<keyword id="KW-0687">Ribonucleoprotein</keyword>
<keyword id="KW-0689">Ribosomal protein</keyword>
<keyword id="KW-0694">RNA-binding</keyword>
<keyword id="KW-0699">rRNA-binding</keyword>
<organism>
    <name type="scientific">Prochlorococcus marinus (strain AS9601)</name>
    <dbReference type="NCBI Taxonomy" id="146891"/>
    <lineage>
        <taxon>Bacteria</taxon>
        <taxon>Bacillati</taxon>
        <taxon>Cyanobacteriota</taxon>
        <taxon>Cyanophyceae</taxon>
        <taxon>Synechococcales</taxon>
        <taxon>Prochlorococcaceae</taxon>
        <taxon>Prochlorococcus</taxon>
    </lineage>
</organism>